<keyword id="KW-0687">Ribonucleoprotein</keyword>
<keyword id="KW-0689">Ribosomal protein</keyword>
<keyword id="KW-0694">RNA-binding</keyword>
<keyword id="KW-0699">rRNA-binding</keyword>
<protein>
    <recommendedName>
        <fullName evidence="1">Small ribosomal subunit protein uS19</fullName>
    </recommendedName>
    <alternativeName>
        <fullName evidence="2">30S ribosomal protein S19</fullName>
    </alternativeName>
</protein>
<evidence type="ECO:0000255" key="1">
    <source>
        <dbReference type="HAMAP-Rule" id="MF_00531"/>
    </source>
</evidence>
<evidence type="ECO:0000305" key="2"/>
<organism>
    <name type="scientific">Cyanothece sp. (strain PCC 7425 / ATCC 29141)</name>
    <dbReference type="NCBI Taxonomy" id="395961"/>
    <lineage>
        <taxon>Bacteria</taxon>
        <taxon>Bacillati</taxon>
        <taxon>Cyanobacteriota</taxon>
        <taxon>Cyanophyceae</taxon>
        <taxon>Gomontiellales</taxon>
        <taxon>Cyanothecaceae</taxon>
        <taxon>Cyanothece</taxon>
    </lineage>
</organism>
<proteinExistence type="inferred from homology"/>
<gene>
    <name evidence="1" type="primary">rpsS</name>
    <name evidence="1" type="synonym">rps19</name>
    <name type="ordered locus">Cyan7425_1296</name>
</gene>
<name>RS19_CYAP4</name>
<feature type="chain" id="PRO_1000146385" description="Small ribosomal subunit protein uS19">
    <location>
        <begin position="1"/>
        <end position="92"/>
    </location>
</feature>
<dbReference type="EMBL" id="CP001344">
    <property type="protein sequence ID" value="ACL43673.1"/>
    <property type="molecule type" value="Genomic_DNA"/>
</dbReference>
<dbReference type="SMR" id="B8HMQ8"/>
<dbReference type="STRING" id="395961.Cyan7425_1296"/>
<dbReference type="KEGG" id="cyn:Cyan7425_1296"/>
<dbReference type="eggNOG" id="COG0185">
    <property type="taxonomic scope" value="Bacteria"/>
</dbReference>
<dbReference type="HOGENOM" id="CLU_144911_0_1_3"/>
<dbReference type="OrthoDB" id="9797833at2"/>
<dbReference type="GO" id="GO:0005737">
    <property type="term" value="C:cytoplasm"/>
    <property type="evidence" value="ECO:0007669"/>
    <property type="project" value="UniProtKB-ARBA"/>
</dbReference>
<dbReference type="GO" id="GO:0015935">
    <property type="term" value="C:small ribosomal subunit"/>
    <property type="evidence" value="ECO:0007669"/>
    <property type="project" value="InterPro"/>
</dbReference>
<dbReference type="GO" id="GO:0019843">
    <property type="term" value="F:rRNA binding"/>
    <property type="evidence" value="ECO:0007669"/>
    <property type="project" value="UniProtKB-UniRule"/>
</dbReference>
<dbReference type="GO" id="GO:0003735">
    <property type="term" value="F:structural constituent of ribosome"/>
    <property type="evidence" value="ECO:0007669"/>
    <property type="project" value="InterPro"/>
</dbReference>
<dbReference type="GO" id="GO:0000028">
    <property type="term" value="P:ribosomal small subunit assembly"/>
    <property type="evidence" value="ECO:0007669"/>
    <property type="project" value="TreeGrafter"/>
</dbReference>
<dbReference type="GO" id="GO:0006412">
    <property type="term" value="P:translation"/>
    <property type="evidence" value="ECO:0007669"/>
    <property type="project" value="UniProtKB-UniRule"/>
</dbReference>
<dbReference type="FunFam" id="3.30.860.10:FF:000001">
    <property type="entry name" value="30S ribosomal protein S19"/>
    <property type="match status" value="1"/>
</dbReference>
<dbReference type="Gene3D" id="3.30.860.10">
    <property type="entry name" value="30s Ribosomal Protein S19, Chain A"/>
    <property type="match status" value="1"/>
</dbReference>
<dbReference type="HAMAP" id="MF_00531">
    <property type="entry name" value="Ribosomal_uS19"/>
    <property type="match status" value="1"/>
</dbReference>
<dbReference type="InterPro" id="IPR002222">
    <property type="entry name" value="Ribosomal_uS19"/>
</dbReference>
<dbReference type="InterPro" id="IPR005732">
    <property type="entry name" value="Ribosomal_uS19_bac-type"/>
</dbReference>
<dbReference type="InterPro" id="IPR020934">
    <property type="entry name" value="Ribosomal_uS19_CS"/>
</dbReference>
<dbReference type="InterPro" id="IPR023575">
    <property type="entry name" value="Ribosomal_uS19_SF"/>
</dbReference>
<dbReference type="NCBIfam" id="TIGR01050">
    <property type="entry name" value="rpsS_bact"/>
    <property type="match status" value="1"/>
</dbReference>
<dbReference type="PANTHER" id="PTHR11880">
    <property type="entry name" value="RIBOSOMAL PROTEIN S19P FAMILY MEMBER"/>
    <property type="match status" value="1"/>
</dbReference>
<dbReference type="PANTHER" id="PTHR11880:SF8">
    <property type="entry name" value="SMALL RIBOSOMAL SUBUNIT PROTEIN US19M"/>
    <property type="match status" value="1"/>
</dbReference>
<dbReference type="Pfam" id="PF00203">
    <property type="entry name" value="Ribosomal_S19"/>
    <property type="match status" value="1"/>
</dbReference>
<dbReference type="PIRSF" id="PIRSF002144">
    <property type="entry name" value="Ribosomal_S19"/>
    <property type="match status" value="1"/>
</dbReference>
<dbReference type="PRINTS" id="PR00975">
    <property type="entry name" value="RIBOSOMALS19"/>
</dbReference>
<dbReference type="SUPFAM" id="SSF54570">
    <property type="entry name" value="Ribosomal protein S19"/>
    <property type="match status" value="1"/>
</dbReference>
<dbReference type="PROSITE" id="PS00323">
    <property type="entry name" value="RIBOSOMAL_S19"/>
    <property type="match status" value="1"/>
</dbReference>
<sequence length="92" mass="10375">MARSLKKGPFVADHLLSKVEALNARGERQVIKTWSRASTILPQMIGHTIAVHNGRQHVPVYVTEQMVGHKLGEFAPTRTFRSHTKGDKKARY</sequence>
<reference key="1">
    <citation type="journal article" date="2011" name="MBio">
        <title>Novel metabolic attributes of the genus Cyanothece, comprising a group of unicellular nitrogen-fixing Cyanobacteria.</title>
        <authorList>
            <person name="Bandyopadhyay A."/>
            <person name="Elvitigala T."/>
            <person name="Welsh E."/>
            <person name="Stockel J."/>
            <person name="Liberton M."/>
            <person name="Min H."/>
            <person name="Sherman L.A."/>
            <person name="Pakrasi H.B."/>
        </authorList>
    </citation>
    <scope>NUCLEOTIDE SEQUENCE [LARGE SCALE GENOMIC DNA]</scope>
    <source>
        <strain>PCC 7425 / ATCC 29141</strain>
    </source>
</reference>
<comment type="function">
    <text evidence="1">Protein S19 forms a complex with S13 that binds strongly to the 16S ribosomal RNA.</text>
</comment>
<comment type="similarity">
    <text evidence="1">Belongs to the universal ribosomal protein uS19 family.</text>
</comment>
<accession>B8HMQ8</accession>